<evidence type="ECO:0000255" key="1">
    <source>
        <dbReference type="HAMAP-Rule" id="MF_01321"/>
    </source>
</evidence>
<sequence length="1342" mass="150502">MVYSYTEKKRIRKDFGKRPQVLDIPYLLSIQLDSFQKFIEQDPEGQYGLEAAFRSVFPIQSYSGNSELQYVSYRLGEPVFDVKECQIRGVTYSAPLRVKLRLVIYEREAPEGTVKDIKEQEVYMGEIPLMTDNGTFVINGTERVIVSQLHRSPGVFFDSDKGKTHSSGKVLYNARIIPYRGSWLDFEFDPKDNLFVRIDRRRKLPATIILRALNYTTEQILDLFFEKVVFEIRDNKLQMELVPERLRGETASFDIEANGKVYVEKGRRITARHIRQLEKDDIKHIEVPVEYIAGKVASKDYIDEATGELICPANMELSLDLLAKLSQSGHKRIETLFTNDLDHGPYISETVRVDPTNDRLSALVEIYRMMRPGEPPTREAAESLFENLFFSEDRYDLSAVGRMKFNRSLLRDEIEGSGILSKDDIIEVMKKLIDIRNGKGEVDDIDHLGNRRIRSVGEMAENQFRVGLVRVERAVKERLSLGDLDTLMPQDMINAKPISAAVKEFFGSSQLSQFMDQNNPLSEITHKRRISALGPGGLTRERAGFEVRDVHPTHYGRVCPIETPEGPNIGLINSLSVYAQTNEYGFLETPYRKVTDGVVTDEIHYLSAIEEGNYVIAQANSNLDENGHFVEDLVTCRSKGESSLFSRDQVDYMDVSTQQVVSVGASLIPFLEHDDANRALMGANMQRQAVPTLRADKPLVGTGMERAVAVDSGVTAVAKRGGTVQYVDASRIVIKVNEDEMYPGEAGIDIYNLTKYTRSNQNTCINQMPCVSLGEPIERGDVLADGPSTDLGELALGQNMRVAFMPWNGYNFEDSILVSERVVQEDRFTTIHIQELACVSRDTKLGPEEITADIPNVGEAALSKLDESGIVYIGAEVTGGDILVGKVTPKGETQLTPEEKLLRAIFGEKASDVKDSSLRVPNGVSGTVIDVQVFTRDGVEKDKRALEIEEMQLKQAKKDLSEELQILEAGLFSRIYAVLVAGGVEADKLDKLPRDRWLELGLTDEEKQNQLEQLAEQYDELKHEFEKKLEAKRRKITQGDDLAPGVLKIVKVYLAVKRRIQPGDKMAGRHGNKGVISKINPIEDMPHDANGTPVDIVLNPLGVPSRMNIGQILETHLGMAAKGIGDKINAMLKQQQEVAKLREFIQRAYDLGADVRQKVDLNTFSDEEVLRLAENLRKGMPIATPVFDGAKEAEIKELLQLGDLPTSGQITLFDGRTGEQFERPVTVGYMYMLKLNHLVDDKMHARSTGSYSLVTQQPLGGKAQFGGQRFGEMEVWALEAYGAAYTLQEMLTVKSDDVNGRTKMYKNIVDGNHQMEPGMPESFNVLLKEIRSLGINIELEDE</sequence>
<keyword id="KW-0240">DNA-directed RNA polymerase</keyword>
<keyword id="KW-0548">Nucleotidyltransferase</keyword>
<keyword id="KW-0804">Transcription</keyword>
<keyword id="KW-0808">Transferase</keyword>
<feature type="chain" id="PRO_1000141703" description="DNA-directed RNA polymerase subunit beta">
    <location>
        <begin position="1"/>
        <end position="1342"/>
    </location>
</feature>
<comment type="function">
    <text evidence="1">DNA-dependent RNA polymerase catalyzes the transcription of DNA into RNA using the four ribonucleoside triphosphates as substrates.</text>
</comment>
<comment type="catalytic activity">
    <reaction evidence="1">
        <text>RNA(n) + a ribonucleoside 5'-triphosphate = RNA(n+1) + diphosphate</text>
        <dbReference type="Rhea" id="RHEA:21248"/>
        <dbReference type="Rhea" id="RHEA-COMP:14527"/>
        <dbReference type="Rhea" id="RHEA-COMP:17342"/>
        <dbReference type="ChEBI" id="CHEBI:33019"/>
        <dbReference type="ChEBI" id="CHEBI:61557"/>
        <dbReference type="ChEBI" id="CHEBI:140395"/>
        <dbReference type="EC" id="2.7.7.6"/>
    </reaction>
</comment>
<comment type="subunit">
    <text evidence="1">The RNAP catalytic core consists of 2 alpha, 1 beta, 1 beta' and 1 omega subunit. When a sigma factor is associated with the core the holoenzyme is formed, which can initiate transcription.</text>
</comment>
<comment type="similarity">
    <text evidence="1">Belongs to the RNA polymerase beta chain family.</text>
</comment>
<organism>
    <name type="scientific">Klebsiella pneumoniae (strain 342)</name>
    <dbReference type="NCBI Taxonomy" id="507522"/>
    <lineage>
        <taxon>Bacteria</taxon>
        <taxon>Pseudomonadati</taxon>
        <taxon>Pseudomonadota</taxon>
        <taxon>Gammaproteobacteria</taxon>
        <taxon>Enterobacterales</taxon>
        <taxon>Enterobacteriaceae</taxon>
        <taxon>Klebsiella/Raoultella group</taxon>
        <taxon>Klebsiella</taxon>
        <taxon>Klebsiella pneumoniae complex</taxon>
    </lineage>
</organism>
<accession>B5XYF5</accession>
<protein>
    <recommendedName>
        <fullName evidence="1">DNA-directed RNA polymerase subunit beta</fullName>
        <shortName evidence="1">RNAP subunit beta</shortName>
        <ecNumber evidence="1">2.7.7.6</ecNumber>
    </recommendedName>
    <alternativeName>
        <fullName evidence="1">RNA polymerase subunit beta</fullName>
    </alternativeName>
    <alternativeName>
        <fullName evidence="1">Transcriptase subunit beta</fullName>
    </alternativeName>
</protein>
<name>RPOB_KLEP3</name>
<proteinExistence type="inferred from homology"/>
<dbReference type="EC" id="2.7.7.6" evidence="1"/>
<dbReference type="EMBL" id="CP000964">
    <property type="protein sequence ID" value="ACI10322.1"/>
    <property type="molecule type" value="Genomic_DNA"/>
</dbReference>
<dbReference type="SMR" id="B5XYF5"/>
<dbReference type="KEGG" id="kpe:KPK_5309"/>
<dbReference type="HOGENOM" id="CLU_000524_4_0_6"/>
<dbReference type="Proteomes" id="UP000001734">
    <property type="component" value="Chromosome"/>
</dbReference>
<dbReference type="GO" id="GO:0000428">
    <property type="term" value="C:DNA-directed RNA polymerase complex"/>
    <property type="evidence" value="ECO:0007669"/>
    <property type="project" value="UniProtKB-KW"/>
</dbReference>
<dbReference type="GO" id="GO:0003677">
    <property type="term" value="F:DNA binding"/>
    <property type="evidence" value="ECO:0007669"/>
    <property type="project" value="UniProtKB-UniRule"/>
</dbReference>
<dbReference type="GO" id="GO:0003899">
    <property type="term" value="F:DNA-directed RNA polymerase activity"/>
    <property type="evidence" value="ECO:0007669"/>
    <property type="project" value="UniProtKB-UniRule"/>
</dbReference>
<dbReference type="GO" id="GO:0032549">
    <property type="term" value="F:ribonucleoside binding"/>
    <property type="evidence" value="ECO:0007669"/>
    <property type="project" value="InterPro"/>
</dbReference>
<dbReference type="GO" id="GO:0006351">
    <property type="term" value="P:DNA-templated transcription"/>
    <property type="evidence" value="ECO:0007669"/>
    <property type="project" value="UniProtKB-UniRule"/>
</dbReference>
<dbReference type="CDD" id="cd00653">
    <property type="entry name" value="RNA_pol_B_RPB2"/>
    <property type="match status" value="1"/>
</dbReference>
<dbReference type="FunFam" id="2.30.150.10:FF:000001">
    <property type="entry name" value="DNA-directed RNA polymerase subunit beta"/>
    <property type="match status" value="1"/>
</dbReference>
<dbReference type="FunFam" id="2.40.270.10:FF:000003">
    <property type="entry name" value="DNA-directed RNA polymerase subunit beta"/>
    <property type="match status" value="1"/>
</dbReference>
<dbReference type="FunFam" id="2.40.270.10:FF:000004">
    <property type="entry name" value="DNA-directed RNA polymerase subunit beta"/>
    <property type="match status" value="1"/>
</dbReference>
<dbReference type="FunFam" id="2.40.50.100:FF:000006">
    <property type="entry name" value="DNA-directed RNA polymerase subunit beta"/>
    <property type="match status" value="1"/>
</dbReference>
<dbReference type="FunFam" id="2.40.50.150:FF:000001">
    <property type="entry name" value="DNA-directed RNA polymerase subunit beta"/>
    <property type="match status" value="1"/>
</dbReference>
<dbReference type="FunFam" id="3.90.1100.10:FF:000002">
    <property type="entry name" value="DNA-directed RNA polymerase subunit beta"/>
    <property type="match status" value="1"/>
</dbReference>
<dbReference type="FunFam" id="3.90.1110.10:FF:000001">
    <property type="entry name" value="DNA-directed RNA polymerase subunit beta"/>
    <property type="match status" value="1"/>
</dbReference>
<dbReference type="FunFam" id="3.90.1110.10:FF:000004">
    <property type="entry name" value="DNA-directed RNA polymerase subunit beta"/>
    <property type="match status" value="1"/>
</dbReference>
<dbReference type="FunFam" id="3.90.1800.10:FF:000001">
    <property type="entry name" value="DNA-directed RNA polymerase subunit beta"/>
    <property type="match status" value="1"/>
</dbReference>
<dbReference type="Gene3D" id="2.40.50.100">
    <property type="match status" value="1"/>
</dbReference>
<dbReference type="Gene3D" id="2.40.50.150">
    <property type="match status" value="1"/>
</dbReference>
<dbReference type="Gene3D" id="3.90.1100.10">
    <property type="match status" value="2"/>
</dbReference>
<dbReference type="Gene3D" id="6.10.140.1670">
    <property type="match status" value="1"/>
</dbReference>
<dbReference type="Gene3D" id="2.30.150.10">
    <property type="entry name" value="DNA-directed RNA polymerase, beta subunit, external 1 domain"/>
    <property type="match status" value="1"/>
</dbReference>
<dbReference type="Gene3D" id="2.40.270.10">
    <property type="entry name" value="DNA-directed RNA polymerase, subunit 2, domain 6"/>
    <property type="match status" value="1"/>
</dbReference>
<dbReference type="Gene3D" id="3.90.1800.10">
    <property type="entry name" value="RNA polymerase alpha subunit dimerisation domain"/>
    <property type="match status" value="1"/>
</dbReference>
<dbReference type="Gene3D" id="3.90.1110.10">
    <property type="entry name" value="RNA polymerase Rpb2, domain 2"/>
    <property type="match status" value="1"/>
</dbReference>
<dbReference type="HAMAP" id="MF_01321">
    <property type="entry name" value="RNApol_bact_RpoB"/>
    <property type="match status" value="1"/>
</dbReference>
<dbReference type="InterPro" id="IPR042107">
    <property type="entry name" value="DNA-dir_RNA_pol_bsu_ext_1_sf"/>
</dbReference>
<dbReference type="InterPro" id="IPR019462">
    <property type="entry name" value="DNA-dir_RNA_pol_bsu_external_1"/>
</dbReference>
<dbReference type="InterPro" id="IPR015712">
    <property type="entry name" value="DNA-dir_RNA_pol_su2"/>
</dbReference>
<dbReference type="InterPro" id="IPR007120">
    <property type="entry name" value="DNA-dir_RNAP_su2_dom"/>
</dbReference>
<dbReference type="InterPro" id="IPR037033">
    <property type="entry name" value="DNA-dir_RNAP_su2_hyb_sf"/>
</dbReference>
<dbReference type="InterPro" id="IPR010243">
    <property type="entry name" value="RNA_pol_bsu_bac"/>
</dbReference>
<dbReference type="InterPro" id="IPR007121">
    <property type="entry name" value="RNA_pol_bsu_CS"/>
</dbReference>
<dbReference type="InterPro" id="IPR007644">
    <property type="entry name" value="RNA_pol_bsu_protrusion"/>
</dbReference>
<dbReference type="InterPro" id="IPR007642">
    <property type="entry name" value="RNA_pol_Rpb2_2"/>
</dbReference>
<dbReference type="InterPro" id="IPR037034">
    <property type="entry name" value="RNA_pol_Rpb2_2_sf"/>
</dbReference>
<dbReference type="InterPro" id="IPR007645">
    <property type="entry name" value="RNA_pol_Rpb2_3"/>
</dbReference>
<dbReference type="InterPro" id="IPR007641">
    <property type="entry name" value="RNA_pol_Rpb2_7"/>
</dbReference>
<dbReference type="InterPro" id="IPR014724">
    <property type="entry name" value="RNA_pol_RPB2_OB-fold"/>
</dbReference>
<dbReference type="NCBIfam" id="NF001616">
    <property type="entry name" value="PRK00405.1"/>
    <property type="match status" value="1"/>
</dbReference>
<dbReference type="NCBIfam" id="TIGR02013">
    <property type="entry name" value="rpoB"/>
    <property type="match status" value="1"/>
</dbReference>
<dbReference type="PANTHER" id="PTHR20856">
    <property type="entry name" value="DNA-DIRECTED RNA POLYMERASE I SUBUNIT 2"/>
    <property type="match status" value="1"/>
</dbReference>
<dbReference type="Pfam" id="PF04563">
    <property type="entry name" value="RNA_pol_Rpb2_1"/>
    <property type="match status" value="1"/>
</dbReference>
<dbReference type="Pfam" id="PF04561">
    <property type="entry name" value="RNA_pol_Rpb2_2"/>
    <property type="match status" value="2"/>
</dbReference>
<dbReference type="Pfam" id="PF04565">
    <property type="entry name" value="RNA_pol_Rpb2_3"/>
    <property type="match status" value="1"/>
</dbReference>
<dbReference type="Pfam" id="PF10385">
    <property type="entry name" value="RNA_pol_Rpb2_45"/>
    <property type="match status" value="1"/>
</dbReference>
<dbReference type="Pfam" id="PF00562">
    <property type="entry name" value="RNA_pol_Rpb2_6"/>
    <property type="match status" value="1"/>
</dbReference>
<dbReference type="Pfam" id="PF04560">
    <property type="entry name" value="RNA_pol_Rpb2_7"/>
    <property type="match status" value="1"/>
</dbReference>
<dbReference type="SUPFAM" id="SSF64484">
    <property type="entry name" value="beta and beta-prime subunits of DNA dependent RNA-polymerase"/>
    <property type="match status" value="1"/>
</dbReference>
<dbReference type="PROSITE" id="PS01166">
    <property type="entry name" value="RNA_POL_BETA"/>
    <property type="match status" value="1"/>
</dbReference>
<reference key="1">
    <citation type="journal article" date="2008" name="PLoS Genet.">
        <title>Complete genome sequence of the N2-fixing broad host range endophyte Klebsiella pneumoniae 342 and virulence predictions verified in mice.</title>
        <authorList>
            <person name="Fouts D.E."/>
            <person name="Tyler H.L."/>
            <person name="DeBoy R.T."/>
            <person name="Daugherty S."/>
            <person name="Ren Q."/>
            <person name="Badger J.H."/>
            <person name="Durkin A.S."/>
            <person name="Huot H."/>
            <person name="Shrivastava S."/>
            <person name="Kothari S."/>
            <person name="Dodson R.J."/>
            <person name="Mohamoud Y."/>
            <person name="Khouri H."/>
            <person name="Roesch L.F.W."/>
            <person name="Krogfelt K.A."/>
            <person name="Struve C."/>
            <person name="Triplett E.W."/>
            <person name="Methe B.A."/>
        </authorList>
    </citation>
    <scope>NUCLEOTIDE SEQUENCE [LARGE SCALE GENOMIC DNA]</scope>
    <source>
        <strain>342</strain>
    </source>
</reference>
<gene>
    <name evidence="1" type="primary">rpoB</name>
    <name type="ordered locus">KPK_5309</name>
</gene>